<evidence type="ECO:0000250" key="1"/>
<evidence type="ECO:0000250" key="2">
    <source>
        <dbReference type="UniProtKB" id="Q16850"/>
    </source>
</evidence>
<evidence type="ECO:0000250" key="3">
    <source>
        <dbReference type="UniProtKB" id="Q64654"/>
    </source>
</evidence>
<evidence type="ECO:0000255" key="4"/>
<evidence type="ECO:0000305" key="5"/>
<proteinExistence type="evidence at transcript level"/>
<name>CP51A_PONAB</name>
<protein>
    <recommendedName>
        <fullName evidence="2">Lanosterol 14-alpha demethylase</fullName>
        <shortName>LDM</shortName>
        <ecNumber evidence="2 3">1.14.14.154</ecNumber>
    </recommendedName>
    <alternativeName>
        <fullName>CYPLI</fullName>
    </alternativeName>
    <alternativeName>
        <fullName>Cytochrome P450 51A1</fullName>
        <shortName evidence="3">CYP51</shortName>
    </alternativeName>
    <alternativeName>
        <fullName>Cytochrome P450-14DM</fullName>
        <shortName>Cytochrome P45014DM</shortName>
    </alternativeName>
    <alternativeName>
        <fullName>Cytochrome P450LI</fullName>
    </alternativeName>
    <alternativeName>
        <fullName>Sterol 14-alpha demethylase</fullName>
    </alternativeName>
</protein>
<sequence>MAAAAGMMLLGLLQAGGSVLGQAMEKVTGGNLLSMLLIACAFTLSLVYLFRLAVGHLVQLPAGAKSPPYIFSPIPFLGHAIAFGKSPIEFLENAYEKYGPVFSFTMVGKTFTYLLGSDAAALLFNSKNEDLNAEDVYSRLTTPVFGKGVAYDVPNPVFLEQKKMLKSGLNIAHFKQHVSIIEKETKEYFESWGESGEKNVFEALSELIILTASHCLHGKEVRSQLNEKVAQLYADLDGGFSHAAWLLPGWLPLPSFRRRDRAHREIKDIFYKAIQKRRQSQEKIDDILQTLLDATYKDGRPLTDDEVAGMLIGLLLAGQHTSSTTSAWMGFFLARDKTLQEKCYLEQKTVCGENLPPLTYDQLKDLNLLDRCIKETLRLRPPIMIMMRMARTPQTVAGYTIPPGHQVCVSPTVNQRLKDSWVERLDFNPDRYLQDNPASGEKFAYVPFGAGRHRCIGENFAYVQIKTIWSTMLRLYEFDLIDGYFPTVNYTTMIHTPENPVIRYKRRSK</sequence>
<gene>
    <name evidence="2" type="primary">CYP51A1</name>
</gene>
<dbReference type="EC" id="1.14.14.154" evidence="2 3"/>
<dbReference type="EMBL" id="CR857665">
    <property type="protein sequence ID" value="CAH89935.1"/>
    <property type="molecule type" value="mRNA"/>
</dbReference>
<dbReference type="RefSeq" id="NP_001124908.1">
    <property type="nucleotide sequence ID" value="NM_001131436.1"/>
</dbReference>
<dbReference type="SMR" id="Q5RE72"/>
<dbReference type="FunCoup" id="Q5RE72">
    <property type="interactions" value="987"/>
</dbReference>
<dbReference type="STRING" id="9601.ENSPPYP00000019976"/>
<dbReference type="Ensembl" id="ENSPPYT00000020764.2">
    <property type="protein sequence ID" value="ENSPPYP00000019976.1"/>
    <property type="gene ID" value="ENSPPYG00000017824.3"/>
</dbReference>
<dbReference type="GeneID" id="100171776"/>
<dbReference type="KEGG" id="pon:100171776"/>
<dbReference type="CTD" id="1595"/>
<dbReference type="eggNOG" id="KOG0684">
    <property type="taxonomic scope" value="Eukaryota"/>
</dbReference>
<dbReference type="GeneTree" id="ENSGT00930000151026"/>
<dbReference type="HOGENOM" id="CLU_001570_15_0_1"/>
<dbReference type="InParanoid" id="Q5RE72"/>
<dbReference type="OMA" id="HWFPFVG"/>
<dbReference type="OrthoDB" id="1055148at2759"/>
<dbReference type="TreeFam" id="TF105091"/>
<dbReference type="UniPathway" id="UPA00770">
    <property type="reaction ID" value="UER00754"/>
</dbReference>
<dbReference type="Proteomes" id="UP000001595">
    <property type="component" value="Chromosome 7"/>
</dbReference>
<dbReference type="GO" id="GO:0005789">
    <property type="term" value="C:endoplasmic reticulum membrane"/>
    <property type="evidence" value="ECO:0007669"/>
    <property type="project" value="UniProtKB-SubCell"/>
</dbReference>
<dbReference type="GO" id="GO:0020037">
    <property type="term" value="F:heme binding"/>
    <property type="evidence" value="ECO:0007669"/>
    <property type="project" value="Ensembl"/>
</dbReference>
<dbReference type="GO" id="GO:0005506">
    <property type="term" value="F:iron ion binding"/>
    <property type="evidence" value="ECO:0007669"/>
    <property type="project" value="InterPro"/>
</dbReference>
<dbReference type="GO" id="GO:0008398">
    <property type="term" value="F:sterol 14-demethylase activity"/>
    <property type="evidence" value="ECO:0007669"/>
    <property type="project" value="UniProtKB-EC"/>
</dbReference>
<dbReference type="GO" id="GO:0006695">
    <property type="term" value="P:cholesterol biosynthetic process"/>
    <property type="evidence" value="ECO:0007669"/>
    <property type="project" value="UniProtKB-KW"/>
</dbReference>
<dbReference type="CDD" id="cd11042">
    <property type="entry name" value="CYP51-like"/>
    <property type="match status" value="1"/>
</dbReference>
<dbReference type="FunFam" id="1.10.630.10:FF:000027">
    <property type="entry name" value="lanosterol 14-alpha demethylase isoform X1"/>
    <property type="match status" value="1"/>
</dbReference>
<dbReference type="Gene3D" id="1.10.630.10">
    <property type="entry name" value="Cytochrome P450"/>
    <property type="match status" value="1"/>
</dbReference>
<dbReference type="InterPro" id="IPR050529">
    <property type="entry name" value="CYP450_sterol_14alpha_dmase"/>
</dbReference>
<dbReference type="InterPro" id="IPR001128">
    <property type="entry name" value="Cyt_P450"/>
</dbReference>
<dbReference type="InterPro" id="IPR017972">
    <property type="entry name" value="Cyt_P450_CS"/>
</dbReference>
<dbReference type="InterPro" id="IPR002403">
    <property type="entry name" value="Cyt_P450_E_grp-IV"/>
</dbReference>
<dbReference type="InterPro" id="IPR036396">
    <property type="entry name" value="Cyt_P450_sf"/>
</dbReference>
<dbReference type="PANTHER" id="PTHR24304:SF2">
    <property type="entry name" value="24-HYDROXYCHOLESTEROL 7-ALPHA-HYDROXYLASE"/>
    <property type="match status" value="1"/>
</dbReference>
<dbReference type="PANTHER" id="PTHR24304">
    <property type="entry name" value="CYTOCHROME P450 FAMILY 7"/>
    <property type="match status" value="1"/>
</dbReference>
<dbReference type="Pfam" id="PF00067">
    <property type="entry name" value="p450"/>
    <property type="match status" value="1"/>
</dbReference>
<dbReference type="PRINTS" id="PR00465">
    <property type="entry name" value="EP450IV"/>
</dbReference>
<dbReference type="PRINTS" id="PR00385">
    <property type="entry name" value="P450"/>
</dbReference>
<dbReference type="SUPFAM" id="SSF48264">
    <property type="entry name" value="Cytochrome P450"/>
    <property type="match status" value="1"/>
</dbReference>
<dbReference type="PROSITE" id="PS00086">
    <property type="entry name" value="CYTOCHROME_P450"/>
    <property type="match status" value="1"/>
</dbReference>
<accession>Q5RE72</accession>
<feature type="chain" id="PRO_0000377745" description="Lanosterol 14-alpha demethylase">
    <location>
        <begin position="1"/>
        <end position="509"/>
    </location>
</feature>
<feature type="transmembrane region" description="Helical" evidence="4">
    <location>
        <begin position="30"/>
        <end position="50"/>
    </location>
</feature>
<feature type="binding site" description="axial binding residue" evidence="1">
    <location>
        <position position="455"/>
    </location>
    <ligand>
        <name>heme</name>
        <dbReference type="ChEBI" id="CHEBI:30413"/>
    </ligand>
    <ligandPart>
        <name>Fe</name>
        <dbReference type="ChEBI" id="CHEBI:18248"/>
    </ligandPart>
</feature>
<comment type="function">
    <text evidence="3">Sterol 14alpha-demethylase that plays a critical role in the cholesterol biosynthesis pathway, being cholesterol the major sterol component in mammalian membranes as well as a precursor for bile acid and steroid hormone synthesis. Cytochrome P450 monooxygenase that catalyzes the three-step oxidative removal of the 14alpha-methyl group (C-32) of sterols such as lanosterol (lanosta-8,24-dien-3beta-ol) and 24,25-dihydrolanosterol (DHL) in the form of formate, and converts the sterols to 4,4-dimethyl-5alpha-cholesta-8,14,24-trien-3beta-ol and 4,4-dimethyl-8,14-cholestadien-3beta-ol, respectively, which are intermediates of cholesterol biosynthesis. Can also demethylate substrates not intrinsic to mammals, such as eburicol (24-methylene-24,25-dihydrolanosterol), but at a lower rate than DHL.</text>
</comment>
<comment type="catalytic activity">
    <reaction evidence="3">
        <text>a 14alpha-methyl steroid + 3 reduced [NADPH--hemoprotein reductase] + 3 O2 = a Delta(14) steroid + formate + 3 oxidized [NADPH--hemoprotein reductase] + 4 H2O + 4 H(+)</text>
        <dbReference type="Rhea" id="RHEA:54028"/>
        <dbReference type="Rhea" id="RHEA-COMP:11964"/>
        <dbReference type="Rhea" id="RHEA-COMP:11965"/>
        <dbReference type="ChEBI" id="CHEBI:15377"/>
        <dbReference type="ChEBI" id="CHEBI:15378"/>
        <dbReference type="ChEBI" id="CHEBI:15379"/>
        <dbReference type="ChEBI" id="CHEBI:15740"/>
        <dbReference type="ChEBI" id="CHEBI:57618"/>
        <dbReference type="ChEBI" id="CHEBI:58210"/>
        <dbReference type="ChEBI" id="CHEBI:138029"/>
        <dbReference type="ChEBI" id="CHEBI:138031"/>
        <dbReference type="EC" id="1.14.14.154"/>
    </reaction>
    <physiologicalReaction direction="left-to-right" evidence="3">
        <dbReference type="Rhea" id="RHEA:54029"/>
    </physiologicalReaction>
</comment>
<comment type="catalytic activity">
    <reaction evidence="3">
        <text>lanosterol + 3 reduced [NADPH--hemoprotein reductase] + 3 O2 = 4,4-dimethyl-5alpha-cholesta-8,14,24-trien-3beta-ol + formate + 3 oxidized [NADPH--hemoprotein reductase] + 4 H2O + 4 H(+)</text>
        <dbReference type="Rhea" id="RHEA:25286"/>
        <dbReference type="Rhea" id="RHEA-COMP:11964"/>
        <dbReference type="Rhea" id="RHEA-COMP:11965"/>
        <dbReference type="ChEBI" id="CHEBI:15377"/>
        <dbReference type="ChEBI" id="CHEBI:15378"/>
        <dbReference type="ChEBI" id="CHEBI:15379"/>
        <dbReference type="ChEBI" id="CHEBI:15740"/>
        <dbReference type="ChEBI" id="CHEBI:16521"/>
        <dbReference type="ChEBI" id="CHEBI:17813"/>
        <dbReference type="ChEBI" id="CHEBI:57618"/>
        <dbReference type="ChEBI" id="CHEBI:58210"/>
        <dbReference type="EC" id="1.14.14.154"/>
    </reaction>
    <physiologicalReaction direction="left-to-right" evidence="3">
        <dbReference type="Rhea" id="RHEA:25287"/>
    </physiologicalReaction>
</comment>
<comment type="catalytic activity">
    <reaction evidence="3">
        <text>24,25-dihydrolanosterol + 3 reduced [NADPH--hemoprotein reductase] + 3 O2 = 4,4-dimethyl-8,14-cholestadien-3beta-ol + formate + 3 oxidized [NADPH--hemoprotein reductase] + 4 H2O + 4 H(+)</text>
        <dbReference type="Rhea" id="RHEA:45960"/>
        <dbReference type="Rhea" id="RHEA-COMP:11964"/>
        <dbReference type="Rhea" id="RHEA-COMP:11965"/>
        <dbReference type="ChEBI" id="CHEBI:15377"/>
        <dbReference type="ChEBI" id="CHEBI:15378"/>
        <dbReference type="ChEBI" id="CHEBI:15379"/>
        <dbReference type="ChEBI" id="CHEBI:15740"/>
        <dbReference type="ChEBI" id="CHEBI:28113"/>
        <dbReference type="ChEBI" id="CHEBI:57618"/>
        <dbReference type="ChEBI" id="CHEBI:58210"/>
        <dbReference type="ChEBI" id="CHEBI:78904"/>
    </reaction>
    <physiologicalReaction direction="left-to-right" evidence="3">
        <dbReference type="Rhea" id="RHEA:45961"/>
    </physiologicalReaction>
</comment>
<comment type="catalytic activity">
    <reaction evidence="3">
        <text>a 14alpha-methyl steroid + reduced [NADPH--hemoprotein reductase] + O2 = a 14alpha-hydroxymethyl steroid + oxidized [NADPH--hemoprotein reductase] + H2O + H(+)</text>
        <dbReference type="Rhea" id="RHEA:68060"/>
        <dbReference type="Rhea" id="RHEA-COMP:11964"/>
        <dbReference type="Rhea" id="RHEA-COMP:11965"/>
        <dbReference type="ChEBI" id="CHEBI:15377"/>
        <dbReference type="ChEBI" id="CHEBI:15378"/>
        <dbReference type="ChEBI" id="CHEBI:15379"/>
        <dbReference type="ChEBI" id="CHEBI:57618"/>
        <dbReference type="ChEBI" id="CHEBI:58210"/>
        <dbReference type="ChEBI" id="CHEBI:138029"/>
        <dbReference type="ChEBI" id="CHEBI:176901"/>
    </reaction>
    <physiologicalReaction direction="left-to-right" evidence="3">
        <dbReference type="Rhea" id="RHEA:68061"/>
    </physiologicalReaction>
</comment>
<comment type="catalytic activity">
    <reaction evidence="3">
        <text>a 14alpha-hydroxymethyl steroid + reduced [NADPH--hemoprotein reductase] + O2 = a 14alpha-formyl steroid + oxidized [NADPH--hemoprotein reductase] + 2 H2O + H(+)</text>
        <dbReference type="Rhea" id="RHEA:68064"/>
        <dbReference type="Rhea" id="RHEA-COMP:11964"/>
        <dbReference type="Rhea" id="RHEA-COMP:11965"/>
        <dbReference type="ChEBI" id="CHEBI:15377"/>
        <dbReference type="ChEBI" id="CHEBI:15378"/>
        <dbReference type="ChEBI" id="CHEBI:15379"/>
        <dbReference type="ChEBI" id="CHEBI:57618"/>
        <dbReference type="ChEBI" id="CHEBI:58210"/>
        <dbReference type="ChEBI" id="CHEBI:176901"/>
        <dbReference type="ChEBI" id="CHEBI:176902"/>
    </reaction>
    <physiologicalReaction direction="left-to-right" evidence="3">
        <dbReference type="Rhea" id="RHEA:68065"/>
    </physiologicalReaction>
</comment>
<comment type="catalytic activity">
    <reaction evidence="3">
        <text>a 14alpha-formyl steroid + reduced [NADPH--hemoprotein reductase] + O2 = a Delta(14) steroid + formate + oxidized [NADPH--hemoprotein reductase] + H2O + 2 H(+)</text>
        <dbReference type="Rhea" id="RHEA:68068"/>
        <dbReference type="Rhea" id="RHEA-COMP:11964"/>
        <dbReference type="Rhea" id="RHEA-COMP:11965"/>
        <dbReference type="ChEBI" id="CHEBI:15377"/>
        <dbReference type="ChEBI" id="CHEBI:15378"/>
        <dbReference type="ChEBI" id="CHEBI:15379"/>
        <dbReference type="ChEBI" id="CHEBI:15740"/>
        <dbReference type="ChEBI" id="CHEBI:57618"/>
        <dbReference type="ChEBI" id="CHEBI:58210"/>
        <dbReference type="ChEBI" id="CHEBI:138031"/>
        <dbReference type="ChEBI" id="CHEBI:176902"/>
    </reaction>
    <physiologicalReaction direction="left-to-right" evidence="3">
        <dbReference type="Rhea" id="RHEA:68069"/>
    </physiologicalReaction>
</comment>
<comment type="catalytic activity">
    <reaction evidence="3">
        <text>lanosterol + reduced [NADPH--hemoprotein reductase] + O2 = 32-hydroxylanosterol + oxidized [NADPH--hemoprotein reductase] + H2O + H(+)</text>
        <dbReference type="Rhea" id="RHEA:75103"/>
        <dbReference type="Rhea" id="RHEA-COMP:11964"/>
        <dbReference type="Rhea" id="RHEA-COMP:11965"/>
        <dbReference type="ChEBI" id="CHEBI:15377"/>
        <dbReference type="ChEBI" id="CHEBI:15378"/>
        <dbReference type="ChEBI" id="CHEBI:15379"/>
        <dbReference type="ChEBI" id="CHEBI:16521"/>
        <dbReference type="ChEBI" id="CHEBI:57618"/>
        <dbReference type="ChEBI" id="CHEBI:58210"/>
        <dbReference type="ChEBI" id="CHEBI:166806"/>
    </reaction>
    <physiologicalReaction direction="left-to-right" evidence="3">
        <dbReference type="Rhea" id="RHEA:75104"/>
    </physiologicalReaction>
</comment>
<comment type="catalytic activity">
    <reaction evidence="3">
        <text>32-hydroxylanosterol + reduced [NADPH--hemoprotein reductase] + O2 = 32-oxolanosterol + oxidized [NADPH--hemoprotein reductase] + 2 H2O + H(+)</text>
        <dbReference type="Rhea" id="RHEA:75107"/>
        <dbReference type="Rhea" id="RHEA-COMP:11964"/>
        <dbReference type="Rhea" id="RHEA-COMP:11965"/>
        <dbReference type="ChEBI" id="CHEBI:15377"/>
        <dbReference type="ChEBI" id="CHEBI:15378"/>
        <dbReference type="ChEBI" id="CHEBI:15379"/>
        <dbReference type="ChEBI" id="CHEBI:57618"/>
        <dbReference type="ChEBI" id="CHEBI:58210"/>
        <dbReference type="ChEBI" id="CHEBI:166681"/>
        <dbReference type="ChEBI" id="CHEBI:166806"/>
    </reaction>
    <physiologicalReaction direction="left-to-right" evidence="3">
        <dbReference type="Rhea" id="RHEA:75108"/>
    </physiologicalReaction>
</comment>
<comment type="catalytic activity">
    <reaction evidence="3">
        <text>32-oxolanosterol + reduced [NADPH--hemoprotein reductase] + O2 = 4,4-dimethyl-5alpha-cholesta-8,14,24-trien-3beta-ol + formate + oxidized [NADPH--hemoprotein reductase] + H2O + 2 H(+)</text>
        <dbReference type="Rhea" id="RHEA:75111"/>
        <dbReference type="Rhea" id="RHEA-COMP:11964"/>
        <dbReference type="Rhea" id="RHEA-COMP:11965"/>
        <dbReference type="ChEBI" id="CHEBI:15377"/>
        <dbReference type="ChEBI" id="CHEBI:15378"/>
        <dbReference type="ChEBI" id="CHEBI:15379"/>
        <dbReference type="ChEBI" id="CHEBI:15740"/>
        <dbReference type="ChEBI" id="CHEBI:17813"/>
        <dbReference type="ChEBI" id="CHEBI:57618"/>
        <dbReference type="ChEBI" id="CHEBI:58210"/>
        <dbReference type="ChEBI" id="CHEBI:166681"/>
    </reaction>
    <physiologicalReaction direction="left-to-right" evidence="3">
        <dbReference type="Rhea" id="RHEA:75112"/>
    </physiologicalReaction>
</comment>
<comment type="catalytic activity">
    <reaction evidence="3">
        <text>24,25-dihydrolanosterol + reduced [NADPH--hemoprotein reductase] + O2 = 32-hydroxy-24,25-dihydrolanosterol + oxidized [NADPH--hemoprotein reductase] + H2O + H(+)</text>
        <dbReference type="Rhea" id="RHEA:75079"/>
        <dbReference type="Rhea" id="RHEA-COMP:11964"/>
        <dbReference type="Rhea" id="RHEA-COMP:11965"/>
        <dbReference type="ChEBI" id="CHEBI:15377"/>
        <dbReference type="ChEBI" id="CHEBI:15378"/>
        <dbReference type="ChEBI" id="CHEBI:15379"/>
        <dbReference type="ChEBI" id="CHEBI:28113"/>
        <dbReference type="ChEBI" id="CHEBI:57618"/>
        <dbReference type="ChEBI" id="CHEBI:58210"/>
        <dbReference type="ChEBI" id="CHEBI:87057"/>
    </reaction>
    <physiologicalReaction direction="left-to-right" evidence="3">
        <dbReference type="Rhea" id="RHEA:75080"/>
    </physiologicalReaction>
</comment>
<comment type="catalytic activity">
    <reaction evidence="3">
        <text>32-hydroxy-24,25-dihydrolanosterol + reduced [NADPH--hemoprotein reductase] + O2 = 32-oxo-24,25-dihydrolanosterol + oxidized [NADPH--hemoprotein reductase] + 2 H2O + H(+)</text>
        <dbReference type="Rhea" id="RHEA:75087"/>
        <dbReference type="Rhea" id="RHEA-COMP:11964"/>
        <dbReference type="Rhea" id="RHEA-COMP:11965"/>
        <dbReference type="ChEBI" id="CHEBI:15377"/>
        <dbReference type="ChEBI" id="CHEBI:15378"/>
        <dbReference type="ChEBI" id="CHEBI:15379"/>
        <dbReference type="ChEBI" id="CHEBI:57618"/>
        <dbReference type="ChEBI" id="CHEBI:58210"/>
        <dbReference type="ChEBI" id="CHEBI:87057"/>
        <dbReference type="ChEBI" id="CHEBI:87060"/>
    </reaction>
    <physiologicalReaction direction="left-to-right" evidence="3">
        <dbReference type="Rhea" id="RHEA:75088"/>
    </physiologicalReaction>
</comment>
<comment type="catalytic activity">
    <reaction evidence="3">
        <text>32-oxo-24,25-dihydrolanosterol + reduced [NADPH--hemoprotein reductase] + O2 = 4,4-dimethyl-8,14-cholestadien-3beta-ol + formate + oxidized [NADPH--hemoprotein reductase] + H2O + 2 H(+)</text>
        <dbReference type="Rhea" id="RHEA:75083"/>
        <dbReference type="Rhea" id="RHEA-COMP:11964"/>
        <dbReference type="Rhea" id="RHEA-COMP:11965"/>
        <dbReference type="ChEBI" id="CHEBI:15377"/>
        <dbReference type="ChEBI" id="CHEBI:15378"/>
        <dbReference type="ChEBI" id="CHEBI:15379"/>
        <dbReference type="ChEBI" id="CHEBI:15740"/>
        <dbReference type="ChEBI" id="CHEBI:57618"/>
        <dbReference type="ChEBI" id="CHEBI:58210"/>
        <dbReference type="ChEBI" id="CHEBI:78904"/>
        <dbReference type="ChEBI" id="CHEBI:87060"/>
    </reaction>
    <physiologicalReaction direction="left-to-right" evidence="3">
        <dbReference type="Rhea" id="RHEA:75084"/>
    </physiologicalReaction>
</comment>
<comment type="cofactor">
    <cofactor evidence="2">
        <name>heme</name>
        <dbReference type="ChEBI" id="CHEBI:30413"/>
    </cofactor>
</comment>
<comment type="activity regulation">
    <text evidence="3">Inhibited by azalanstat. Inhibited by azole antifungal agents ketoconazole, itraconazole and fluconazole.</text>
</comment>
<comment type="pathway">
    <text evidence="3">Steroid biosynthesis; zymosterol biosynthesis; zymosterol from lanosterol: step 1/6.</text>
</comment>
<comment type="subcellular location">
    <subcellularLocation>
        <location evidence="3">Endoplasmic reticulum membrane</location>
        <topology evidence="4">Single-pass membrane protein</topology>
    </subcellularLocation>
    <subcellularLocation>
        <location evidence="3">Microsome membrane</location>
        <topology evidence="4">Single-pass membrane protein</topology>
    </subcellularLocation>
</comment>
<comment type="PTM">
    <text evidence="2">Ubiquitinated by MARCHF6, leading to proteasomal degradation.</text>
</comment>
<comment type="similarity">
    <text evidence="5">Belongs to the cytochrome P450 family.</text>
</comment>
<comment type="caution">
    <text evidence="5">It is uncertain whether Met-1 or Met-7 is the initiator.</text>
</comment>
<organism>
    <name type="scientific">Pongo abelii</name>
    <name type="common">Sumatran orangutan</name>
    <name type="synonym">Pongo pygmaeus abelii</name>
    <dbReference type="NCBI Taxonomy" id="9601"/>
    <lineage>
        <taxon>Eukaryota</taxon>
        <taxon>Metazoa</taxon>
        <taxon>Chordata</taxon>
        <taxon>Craniata</taxon>
        <taxon>Vertebrata</taxon>
        <taxon>Euteleostomi</taxon>
        <taxon>Mammalia</taxon>
        <taxon>Eutheria</taxon>
        <taxon>Euarchontoglires</taxon>
        <taxon>Primates</taxon>
        <taxon>Haplorrhini</taxon>
        <taxon>Catarrhini</taxon>
        <taxon>Hominidae</taxon>
        <taxon>Pongo</taxon>
    </lineage>
</organism>
<reference key="1">
    <citation type="submission" date="2004-11" db="EMBL/GenBank/DDBJ databases">
        <authorList>
            <consortium name="The German cDNA consortium"/>
        </authorList>
    </citation>
    <scope>NUCLEOTIDE SEQUENCE [LARGE SCALE MRNA]</scope>
    <source>
        <tissue>Heart</tissue>
    </source>
</reference>
<keyword id="KW-0152">Cholesterol biosynthesis</keyword>
<keyword id="KW-0153">Cholesterol metabolism</keyword>
<keyword id="KW-0256">Endoplasmic reticulum</keyword>
<keyword id="KW-0349">Heme</keyword>
<keyword id="KW-0408">Iron</keyword>
<keyword id="KW-0444">Lipid biosynthesis</keyword>
<keyword id="KW-0443">Lipid metabolism</keyword>
<keyword id="KW-0472">Membrane</keyword>
<keyword id="KW-0479">Metal-binding</keyword>
<keyword id="KW-0492">Microsome</keyword>
<keyword id="KW-0503">Monooxygenase</keyword>
<keyword id="KW-0560">Oxidoreductase</keyword>
<keyword id="KW-1185">Reference proteome</keyword>
<keyword id="KW-0752">Steroid biosynthesis</keyword>
<keyword id="KW-0753">Steroid metabolism</keyword>
<keyword id="KW-0756">Sterol biosynthesis</keyword>
<keyword id="KW-1207">Sterol metabolism</keyword>
<keyword id="KW-0812">Transmembrane</keyword>
<keyword id="KW-1133">Transmembrane helix</keyword>
<keyword id="KW-0832">Ubl conjugation</keyword>